<comment type="function">
    <text evidence="1">Cleaves peptides in various proteins in a process that requires ATP hydrolysis. Has a chymotrypsin-like activity. Plays a major role in the degradation of misfolded proteins.</text>
</comment>
<comment type="catalytic activity">
    <reaction evidence="1">
        <text>Hydrolysis of proteins to small peptides in the presence of ATP and magnesium. alpha-casein is the usual test substrate. In the absence of ATP, only oligopeptides shorter than five residues are hydrolyzed (such as succinyl-Leu-Tyr-|-NHMec, and Leu-Tyr-Leu-|-Tyr-Trp, in which cleavage of the -Tyr-|-Leu- and -Tyr-|-Trp bonds also occurs).</text>
        <dbReference type="EC" id="3.4.21.92"/>
    </reaction>
</comment>
<comment type="subunit">
    <text evidence="1">Fourteen ClpP subunits assemble into 2 heptameric rings which stack back to back to give a disk-like structure with a central cavity, resembling the structure of eukaryotic proteasomes. Component of the ClpAP and ClpXP complexes.</text>
</comment>
<comment type="subcellular location">
    <subcellularLocation>
        <location evidence="1">Cytoplasm</location>
    </subcellularLocation>
</comment>
<comment type="similarity">
    <text evidence="1">Belongs to the peptidase S14 family.</text>
</comment>
<accession>B4SWU1</accession>
<proteinExistence type="inferred from homology"/>
<evidence type="ECO:0000255" key="1">
    <source>
        <dbReference type="HAMAP-Rule" id="MF_00444"/>
    </source>
</evidence>
<name>CLPP_SALNS</name>
<gene>
    <name evidence="1" type="primary">clpP</name>
    <name type="ordered locus">SNSL254_A0497</name>
</gene>
<sequence length="207" mass="23177">MSYSGERDNLAPHMALVPMVIEQTSRGERSFDIYSRLLKERVIFLTGQVEDHMANLIVAQMLFLEAENPEKDIYLYINSPGGVITAGMSIYDTMQFIKPDVSTICMGQAASMGAFLLTAGAKGKRFCLPNSRVMIHQPLGGYQGQATDIEIHAREILKVKGRMNELMAHHTGQSLEQIERDTERDRFLSAPEAVEYGLVDSILTHRN</sequence>
<dbReference type="EC" id="3.4.21.92" evidence="1"/>
<dbReference type="EMBL" id="CP001113">
    <property type="protein sequence ID" value="ACF62831.1"/>
    <property type="molecule type" value="Genomic_DNA"/>
</dbReference>
<dbReference type="RefSeq" id="WP_000122257.1">
    <property type="nucleotide sequence ID" value="NZ_CCMR01000003.1"/>
</dbReference>
<dbReference type="BMRB" id="B4SWU1"/>
<dbReference type="SMR" id="B4SWU1"/>
<dbReference type="MEROPS" id="S14.001"/>
<dbReference type="GeneID" id="66754911"/>
<dbReference type="KEGG" id="see:SNSL254_A0497"/>
<dbReference type="HOGENOM" id="CLU_058707_3_2_6"/>
<dbReference type="Proteomes" id="UP000008824">
    <property type="component" value="Chromosome"/>
</dbReference>
<dbReference type="GO" id="GO:0005737">
    <property type="term" value="C:cytoplasm"/>
    <property type="evidence" value="ECO:0007669"/>
    <property type="project" value="UniProtKB-SubCell"/>
</dbReference>
<dbReference type="GO" id="GO:0009368">
    <property type="term" value="C:endopeptidase Clp complex"/>
    <property type="evidence" value="ECO:0007669"/>
    <property type="project" value="TreeGrafter"/>
</dbReference>
<dbReference type="GO" id="GO:0004176">
    <property type="term" value="F:ATP-dependent peptidase activity"/>
    <property type="evidence" value="ECO:0007669"/>
    <property type="project" value="InterPro"/>
</dbReference>
<dbReference type="GO" id="GO:0051117">
    <property type="term" value="F:ATPase binding"/>
    <property type="evidence" value="ECO:0007669"/>
    <property type="project" value="TreeGrafter"/>
</dbReference>
<dbReference type="GO" id="GO:0004252">
    <property type="term" value="F:serine-type endopeptidase activity"/>
    <property type="evidence" value="ECO:0007669"/>
    <property type="project" value="UniProtKB-UniRule"/>
</dbReference>
<dbReference type="GO" id="GO:0006515">
    <property type="term" value="P:protein quality control for misfolded or incompletely synthesized proteins"/>
    <property type="evidence" value="ECO:0007669"/>
    <property type="project" value="TreeGrafter"/>
</dbReference>
<dbReference type="CDD" id="cd07017">
    <property type="entry name" value="S14_ClpP_2"/>
    <property type="match status" value="1"/>
</dbReference>
<dbReference type="FunFam" id="3.90.226.10:FF:000001">
    <property type="entry name" value="ATP-dependent Clp protease proteolytic subunit"/>
    <property type="match status" value="1"/>
</dbReference>
<dbReference type="Gene3D" id="3.90.226.10">
    <property type="entry name" value="2-enoyl-CoA Hydratase, Chain A, domain 1"/>
    <property type="match status" value="1"/>
</dbReference>
<dbReference type="HAMAP" id="MF_00444">
    <property type="entry name" value="ClpP"/>
    <property type="match status" value="1"/>
</dbReference>
<dbReference type="InterPro" id="IPR001907">
    <property type="entry name" value="ClpP"/>
</dbReference>
<dbReference type="InterPro" id="IPR029045">
    <property type="entry name" value="ClpP/crotonase-like_dom_sf"/>
</dbReference>
<dbReference type="InterPro" id="IPR023562">
    <property type="entry name" value="ClpP/TepA"/>
</dbReference>
<dbReference type="InterPro" id="IPR033135">
    <property type="entry name" value="ClpP_His_AS"/>
</dbReference>
<dbReference type="InterPro" id="IPR018215">
    <property type="entry name" value="ClpP_Ser_AS"/>
</dbReference>
<dbReference type="NCBIfam" id="TIGR00493">
    <property type="entry name" value="clpP"/>
    <property type="match status" value="1"/>
</dbReference>
<dbReference type="NCBIfam" id="NF001368">
    <property type="entry name" value="PRK00277.1"/>
    <property type="match status" value="1"/>
</dbReference>
<dbReference type="NCBIfam" id="NF009205">
    <property type="entry name" value="PRK12553.1"/>
    <property type="match status" value="1"/>
</dbReference>
<dbReference type="PANTHER" id="PTHR10381">
    <property type="entry name" value="ATP-DEPENDENT CLP PROTEASE PROTEOLYTIC SUBUNIT"/>
    <property type="match status" value="1"/>
</dbReference>
<dbReference type="PANTHER" id="PTHR10381:SF70">
    <property type="entry name" value="ATP-DEPENDENT CLP PROTEASE PROTEOLYTIC SUBUNIT"/>
    <property type="match status" value="1"/>
</dbReference>
<dbReference type="Pfam" id="PF00574">
    <property type="entry name" value="CLP_protease"/>
    <property type="match status" value="1"/>
</dbReference>
<dbReference type="PRINTS" id="PR00127">
    <property type="entry name" value="CLPPROTEASEP"/>
</dbReference>
<dbReference type="SUPFAM" id="SSF52096">
    <property type="entry name" value="ClpP/crotonase"/>
    <property type="match status" value="1"/>
</dbReference>
<dbReference type="PROSITE" id="PS00382">
    <property type="entry name" value="CLP_PROTEASE_HIS"/>
    <property type="match status" value="1"/>
</dbReference>
<dbReference type="PROSITE" id="PS00381">
    <property type="entry name" value="CLP_PROTEASE_SER"/>
    <property type="match status" value="1"/>
</dbReference>
<reference key="1">
    <citation type="journal article" date="2011" name="J. Bacteriol.">
        <title>Comparative genomics of 28 Salmonella enterica isolates: evidence for CRISPR-mediated adaptive sublineage evolution.</title>
        <authorList>
            <person name="Fricke W.F."/>
            <person name="Mammel M.K."/>
            <person name="McDermott P.F."/>
            <person name="Tartera C."/>
            <person name="White D.G."/>
            <person name="Leclerc J.E."/>
            <person name="Ravel J."/>
            <person name="Cebula T.A."/>
        </authorList>
    </citation>
    <scope>NUCLEOTIDE SEQUENCE [LARGE SCALE GENOMIC DNA]</scope>
    <source>
        <strain>SL254</strain>
    </source>
</reference>
<feature type="chain" id="PRO_1000189664" description="ATP-dependent Clp protease proteolytic subunit">
    <location>
        <begin position="1"/>
        <end position="207"/>
    </location>
</feature>
<feature type="active site" description="Nucleophile" evidence="1">
    <location>
        <position position="111"/>
    </location>
</feature>
<feature type="active site" evidence="1">
    <location>
        <position position="136"/>
    </location>
</feature>
<keyword id="KW-0963">Cytoplasm</keyword>
<keyword id="KW-0378">Hydrolase</keyword>
<keyword id="KW-0645">Protease</keyword>
<keyword id="KW-0720">Serine protease</keyword>
<protein>
    <recommendedName>
        <fullName evidence="1">ATP-dependent Clp protease proteolytic subunit</fullName>
        <ecNumber evidence="1">3.4.21.92</ecNumber>
    </recommendedName>
    <alternativeName>
        <fullName evidence="1">Endopeptidase Clp</fullName>
    </alternativeName>
</protein>
<organism>
    <name type="scientific">Salmonella newport (strain SL254)</name>
    <dbReference type="NCBI Taxonomy" id="423368"/>
    <lineage>
        <taxon>Bacteria</taxon>
        <taxon>Pseudomonadati</taxon>
        <taxon>Pseudomonadota</taxon>
        <taxon>Gammaproteobacteria</taxon>
        <taxon>Enterobacterales</taxon>
        <taxon>Enterobacteriaceae</taxon>
        <taxon>Salmonella</taxon>
    </lineage>
</organism>